<name>CAPSD_AQRVA</name>
<organism>
    <name type="scientific">Aquareovirus A (isolate Chum salmon/Japan/CSRV/1981)</name>
    <name type="common">AQRV-A</name>
    <dbReference type="NCBI Taxonomy" id="928295"/>
    <lineage>
        <taxon>Viruses</taxon>
        <taxon>Riboviria</taxon>
        <taxon>Orthornavirae</taxon>
        <taxon>Duplornaviricota</taxon>
        <taxon>Resentoviricetes</taxon>
        <taxon>Reovirales</taxon>
        <taxon>Spinareoviridae</taxon>
        <taxon>Aquareovirus</taxon>
        <taxon>Aquareovirus salmonis</taxon>
    </lineage>
</organism>
<organismHost>
    <name type="scientific">Oncorhynchus keta</name>
    <name type="common">Chum salmon</name>
    <name type="synonym">Salmo keta</name>
    <dbReference type="NCBI Taxonomy" id="8018"/>
</organismHost>
<evidence type="ECO:0000250" key="1">
    <source>
        <dbReference type="UniProtKB" id="B2BNE1"/>
    </source>
</evidence>
<evidence type="ECO:0000250" key="2">
    <source>
        <dbReference type="UniProtKB" id="P15024"/>
    </source>
</evidence>
<evidence type="ECO:0000255" key="3">
    <source>
        <dbReference type="PROSITE-ProRule" id="PRU00042"/>
    </source>
</evidence>
<evidence type="ECO:0000256" key="4">
    <source>
        <dbReference type="SAM" id="MobiDB-lite"/>
    </source>
</evidence>
<evidence type="ECO:0000305" key="5"/>
<proteinExistence type="inferred from homology"/>
<comment type="function">
    <text evidence="2">Inner capsid protein that self-assembles to form an icosahedral capsid with a T=2 symmetry, which consists of 120 copies of VP2, with channels at each of its five-fold vertices. This capsid constitutes the innermost concentric layer of the viral mature particle.</text>
</comment>
<comment type="subunit">
    <text evidence="1">Homodecamer; each decamer is made up of two conformers of VP2, called VP2A and VP2B. 12 homodecamers assemble to form an icosahedral capsid. Interacts with VP6.</text>
</comment>
<comment type="subcellular location">
    <subcellularLocation>
        <location evidence="2">Virion</location>
    </subcellularLocation>
    <text evidence="2">Found in the inner capsid (120 copies).</text>
</comment>
<comment type="similarity">
    <text evidence="5">Belongs to the turreted BTV-fold inner capsid family.</text>
</comment>
<sequence length="1210" mass="131944">MPRTSRNVRATEVATTAIPPSNAATDTTVDTTVAPTIASADAAQHASNISSSQLGPAGVSDKVPSSVVTNDGDISVTPISENAAQLASSNQPASVIRNPVAAATISIVNPSSLRCQQCGAKFSSMTQLAEHVRTEHRTGAGSLVTSPAINQAIESWLLTWEDLRLLAPTIATDALNKYMGEAVAKAPLLIVEDEGLCTSFLASDTISIAGLQREIVGFTWFMETLQMIPALPEGAVNHPICHTGWASKDSVSRHLDVRLSPPTHGGCFSIHYRTVEGIRQGHAIQPSYFPCQRPHAGPQVRSVQSQDQQVYSVDSGPDPRSRGRYVRFFDNKELFAVAYPGREVLMEANRNALFLDESLPDRVGCIGRAQNVSGDVSAHIDTYELCDDLTLAIREMYHNMLFSMHLDPASVMEIVQDVSQQLVAASIPFAQTDTILCPWAASTPTLQLSQVLNLLNVANNTSAALPLIEAAATLIMGITPLRMEPRILSEAIKRVPETTTIVPSPTGELTRLLKPLGNDYSAIYRCIAGCLYSGLVQMFISADAYPDPTQSITSIPAIWKSLIVMLAAPMTTDPHAAVKAFMSMANLLAQPEPIIIPAPGMTQSTPAVQFSHPEVWPPGFVDPTTLDRNRTPLLHALATMIHAHWPQPGVIQYGRSRLGSANLFLPANQLTYPWPTQPLPRITVGPTYDSAMFRWIDSVFGFYINVVNSRYVATIVGDTTRRTLTGLMAALMQVKTMTPFYIERMCPTEVAVVGGVTVFPPFQVPITRLDPTQVITNVMVSPRGPPAPCRRSRRSHRYYAYAAPIPCQSIPLRLSLLCCVRQTEATLGPSYHYGSAITPMFLSEELFTRNQRAVIASEAFVCARSIIAQCVPDGFQVPRPLQDFNQYNASGSTAADLLKAVDDMFKTAFDIDGSLIEGIGLYGDPRVADLSVAYLRQNGAVERVHTAPDSSFLHEAMQVTSQVMVNEPNLWAIARGDIILAQNATHNNWDPLNPVGLPIFARGGPNVHVVGSRGMIIPQPGGLAPMIRDDAGNPQQIEGDWIYPISVLQVSVANFRDHVWPMIQAGRTRVRIEMGHFLYSIHYHEPFGQITEAPAIDTWLAGISPTGIPPFPLSAPIPQITIPITARRVYFGYCTMNNTGATFSTLGAAIQSAWGTDVTIQRNRWPALIDPNYIPGQSQLPARVQLYNPLRRYNYRYPSLKGMLYIPGVE</sequence>
<accession>Q8VA41</accession>
<protein>
    <recommendedName>
        <fullName>Inner capsid protein VP3</fullName>
    </recommendedName>
    <alternativeName>
        <fullName>ATP-dependent DNA helicase VP3</fullName>
    </alternativeName>
</protein>
<feature type="chain" id="PRO_0000404168" description="Inner capsid protein VP3">
    <location>
        <begin position="1"/>
        <end position="1210"/>
    </location>
</feature>
<feature type="zinc finger region" description="C2H2-type" evidence="3">
    <location>
        <begin position="113"/>
        <end position="136"/>
    </location>
</feature>
<feature type="region of interest" description="Disordered" evidence="4">
    <location>
        <begin position="1"/>
        <end position="28"/>
    </location>
</feature>
<feature type="region of interest" description="Disordered" evidence="4">
    <location>
        <begin position="294"/>
        <end position="319"/>
    </location>
</feature>
<feature type="compositionally biased region" description="Low complexity" evidence="4">
    <location>
        <begin position="299"/>
        <end position="315"/>
    </location>
</feature>
<reference key="1">
    <citation type="journal article" date="1987" name="J. Gen. Virol.">
        <title>Morphological and biochemical properties of four members of a novel group of reoviruses isolated from aquatic animals.</title>
        <authorList>
            <person name="Winton J.R."/>
            <person name="Lannan C.N."/>
            <person name="Fryer J.L."/>
            <person name="Hedrick R.P."/>
            <person name="Meyers T.R."/>
            <person name="Plumb J.A."/>
            <person name="Yamamoto T."/>
        </authorList>
    </citation>
    <scope>NUCLEOTIDE SEQUENCE [GENOMIC RNA]</scope>
</reference>
<reference key="2">
    <citation type="submission" date="2001-09" db="EMBL/GenBank/DDBJ databases">
        <title>Complete genome sequence of the chum salmon virus.</title>
        <authorList>
            <person name="Rao S."/>
            <person name="Carner G.R."/>
            <person name="Chen W."/>
            <person name="Winton J.R."/>
        </authorList>
    </citation>
    <scope>NUCLEOTIDE SEQUENCE [GENOMIC RNA]</scope>
</reference>
<keyword id="KW-0067">ATP-binding</keyword>
<keyword id="KW-0167">Capsid protein</keyword>
<keyword id="KW-0347">Helicase</keyword>
<keyword id="KW-0378">Hydrolase</keyword>
<keyword id="KW-1153">Inner capsid protein</keyword>
<keyword id="KW-0479">Metal-binding</keyword>
<keyword id="KW-0506">mRNA capping</keyword>
<keyword id="KW-0507">mRNA processing</keyword>
<keyword id="KW-0547">Nucleotide-binding</keyword>
<keyword id="KW-1141">T=2 icosahedral capsid protein</keyword>
<keyword id="KW-0946">Virion</keyword>
<keyword id="KW-0862">Zinc</keyword>
<keyword id="KW-0863">Zinc-finger</keyword>
<dbReference type="EMBL" id="AF418296">
    <property type="protein sequence ID" value="AAL31498.1"/>
    <property type="molecule type" value="Genomic_RNA"/>
</dbReference>
<dbReference type="SMR" id="Q8VA41"/>
<dbReference type="KEGG" id="vg:3773157"/>
<dbReference type="Proteomes" id="UP000101606">
    <property type="component" value="Genome"/>
</dbReference>
<dbReference type="GO" id="GO:0039616">
    <property type="term" value="C:T=2 icosahedral viral capsid"/>
    <property type="evidence" value="ECO:0007669"/>
    <property type="project" value="UniProtKB-KW"/>
</dbReference>
<dbReference type="GO" id="GO:0039625">
    <property type="term" value="C:viral inner capsid"/>
    <property type="evidence" value="ECO:0007669"/>
    <property type="project" value="UniProtKB-KW"/>
</dbReference>
<dbReference type="GO" id="GO:0005524">
    <property type="term" value="F:ATP binding"/>
    <property type="evidence" value="ECO:0007669"/>
    <property type="project" value="UniProtKB-KW"/>
</dbReference>
<dbReference type="GO" id="GO:0016787">
    <property type="term" value="F:hydrolase activity"/>
    <property type="evidence" value="ECO:0007669"/>
    <property type="project" value="UniProtKB-KW"/>
</dbReference>
<dbReference type="GO" id="GO:0003724">
    <property type="term" value="F:RNA helicase activity"/>
    <property type="evidence" value="ECO:0007669"/>
    <property type="project" value="UniProtKB-EC"/>
</dbReference>
<dbReference type="GO" id="GO:0008270">
    <property type="term" value="F:zinc ion binding"/>
    <property type="evidence" value="ECO:0007669"/>
    <property type="project" value="UniProtKB-KW"/>
</dbReference>
<dbReference type="GO" id="GO:0006370">
    <property type="term" value="P:7-methylguanosine mRNA capping"/>
    <property type="evidence" value="ECO:0007669"/>
    <property type="project" value="UniProtKB-KW"/>
</dbReference>
<dbReference type="Gene3D" id="3.90.1830.10">
    <property type="entry name" value="Inner capsid protein lambda-1"/>
    <property type="match status" value="1"/>
</dbReference>
<dbReference type="InterPro" id="IPR054176">
    <property type="entry name" value="Lamba1_VP3"/>
</dbReference>
<dbReference type="InterPro" id="IPR044949">
    <property type="entry name" value="Lambda-1/VP3_sf"/>
</dbReference>
<dbReference type="InterPro" id="IPR013087">
    <property type="entry name" value="Znf_C2H2_type"/>
</dbReference>
<dbReference type="Pfam" id="PF22033">
    <property type="entry name" value="Lamba1_VP3"/>
    <property type="match status" value="1"/>
</dbReference>
<dbReference type="SMART" id="SM00355">
    <property type="entry name" value="ZnF_C2H2"/>
    <property type="match status" value="1"/>
</dbReference>
<dbReference type="PROSITE" id="PS00028">
    <property type="entry name" value="ZINC_FINGER_C2H2_1"/>
    <property type="match status" value="1"/>
</dbReference>
<dbReference type="PROSITE" id="PS50157">
    <property type="entry name" value="ZINC_FINGER_C2H2_2"/>
    <property type="match status" value="1"/>
</dbReference>
<gene>
    <name type="primary">S3</name>
</gene>